<name>HELB2_ASPFU</name>
<proteinExistence type="evidence at protein level"/>
<protein>
    <recommendedName>
        <fullName evidence="9">Cytochrome P450 monooxygenase helB2</fullName>
        <ecNumber evidence="5 7">1.-.-.-</ecNumber>
    </recommendedName>
    <alternativeName>
        <fullName evidence="9">Helvolic acid biosynthesis cluster protein B2</fullName>
    </alternativeName>
</protein>
<accession>Q4WR18</accession>
<comment type="function">
    <text evidence="4 5 7">Cytochrome P450 monooxygenase; part of the gene cluster that mediates the biosynthesis of helvolic acid, an antibacterial nortriterpenoid (PubMed:19216560, PubMed:19415934, PubMed:29158519). Protostadienol synthase helA cyclizes (3S)-oxidosqualene to (17Z)-protosta-17(20),24-dien-3-beta-ol (protostadienol) (PubMed:19216560, PubMed:19415934, PubMed:29158519). The synthesis of protostadienol is followed by several steps of monooxygenation, dehydrogenation, and acyl transfer to yield the final helvolic acid (PubMed:19216560). Following the cyclization to the tetracyclic protostadienol by helA, cytochrome P450 monooxygenases helB1-mediated and helB2-mediated oxidation at C-4 and C-16, acyltransferase helD2-dependent acetylation of 16-OH, oxidation of C-21 by cytochrome P450 monooxygenase helB4, and short chain dehydrogenase helC-dependent oxidative decarboxylation yield the fusidane skeleton (PubMed:29158519). This intermediate is further modified in three additional steps mediated by the cytochrome P450 monooxygenase helB3, the acyltransferase helD1, and the 3-ketosteroid 1-dehydrogenase helE to give helvolic acid (PubMed:19216560, PubMed:19415934, PubMed:29158519). Compared with the late stages in the biosynthesis of helvolic acid, enzymes involved in the early stage modifications act in a relatively strict order (PubMed:29158519). The hydroxylation of C-16 by helB1 and subsequent acetylation by helD2 should occur before the helB3-mediated oxidation of C-21 (PubMed:29158519). C-4 demethylation in fusidane-type antibiotics proceeds in an unusual manner though it is also achieved by oxidative decarboxylation (PubMed:19415934, PubMed:29158519). The methyl group at C-4 beta position is oxidized by helB1 and subsequently removed by the short chain dehydrogenase helC (PubMed:19415934, PubMed:29158519).</text>
</comment>
<comment type="cofactor">
    <cofactor evidence="1">
        <name>heme</name>
        <dbReference type="ChEBI" id="CHEBI:30413"/>
    </cofactor>
</comment>
<comment type="pathway">
    <text evidence="7 11">Mycotoxin biosynthesis.</text>
</comment>
<comment type="induction">
    <text evidence="3 6">Expression is under the control of the secondary metabolism regulator laeA (PubMed:17432932). Expression is completely abrogated when gliT is deleted in cells exposed to exogenous gliotoxin (PubMed:25311525).</text>
</comment>
<comment type="similarity">
    <text>Belongs to the cytochrome P450 family.</text>
</comment>
<reference key="1">
    <citation type="journal article" date="2005" name="Nature">
        <title>Genomic sequence of the pathogenic and allergenic filamentous fungus Aspergillus fumigatus.</title>
        <authorList>
            <person name="Nierman W.C."/>
            <person name="Pain A."/>
            <person name="Anderson M.J."/>
            <person name="Wortman J.R."/>
            <person name="Kim H.S."/>
            <person name="Arroyo J."/>
            <person name="Berriman M."/>
            <person name="Abe K."/>
            <person name="Archer D.B."/>
            <person name="Bermejo C."/>
            <person name="Bennett J.W."/>
            <person name="Bowyer P."/>
            <person name="Chen D."/>
            <person name="Collins M."/>
            <person name="Coulsen R."/>
            <person name="Davies R."/>
            <person name="Dyer P.S."/>
            <person name="Farman M.L."/>
            <person name="Fedorova N."/>
            <person name="Fedorova N.D."/>
            <person name="Feldblyum T.V."/>
            <person name="Fischer R."/>
            <person name="Fosker N."/>
            <person name="Fraser A."/>
            <person name="Garcia J.L."/>
            <person name="Garcia M.J."/>
            <person name="Goble A."/>
            <person name="Goldman G.H."/>
            <person name="Gomi K."/>
            <person name="Griffith-Jones S."/>
            <person name="Gwilliam R."/>
            <person name="Haas B.J."/>
            <person name="Haas H."/>
            <person name="Harris D.E."/>
            <person name="Horiuchi H."/>
            <person name="Huang J."/>
            <person name="Humphray S."/>
            <person name="Jimenez J."/>
            <person name="Keller N."/>
            <person name="Khouri H."/>
            <person name="Kitamoto K."/>
            <person name="Kobayashi T."/>
            <person name="Konzack S."/>
            <person name="Kulkarni R."/>
            <person name="Kumagai T."/>
            <person name="Lafton A."/>
            <person name="Latge J.-P."/>
            <person name="Li W."/>
            <person name="Lord A."/>
            <person name="Lu C."/>
            <person name="Majoros W.H."/>
            <person name="May G.S."/>
            <person name="Miller B.L."/>
            <person name="Mohamoud Y."/>
            <person name="Molina M."/>
            <person name="Monod M."/>
            <person name="Mouyna I."/>
            <person name="Mulligan S."/>
            <person name="Murphy L.D."/>
            <person name="O'Neil S."/>
            <person name="Paulsen I."/>
            <person name="Penalva M.A."/>
            <person name="Pertea M."/>
            <person name="Price C."/>
            <person name="Pritchard B.L."/>
            <person name="Quail M.A."/>
            <person name="Rabbinowitsch E."/>
            <person name="Rawlins N."/>
            <person name="Rajandream M.A."/>
            <person name="Reichard U."/>
            <person name="Renauld H."/>
            <person name="Robson G.D."/>
            <person name="Rodriguez de Cordoba S."/>
            <person name="Rodriguez-Pena J.M."/>
            <person name="Ronning C.M."/>
            <person name="Rutter S."/>
            <person name="Salzberg S.L."/>
            <person name="Sanchez M."/>
            <person name="Sanchez-Ferrero J.C."/>
            <person name="Saunders D."/>
            <person name="Seeger K."/>
            <person name="Squares R."/>
            <person name="Squares S."/>
            <person name="Takeuchi M."/>
            <person name="Tekaia F."/>
            <person name="Turner G."/>
            <person name="Vazquez de Aldana C.R."/>
            <person name="Weidman J."/>
            <person name="White O."/>
            <person name="Woodward J.R."/>
            <person name="Yu J.-H."/>
            <person name="Fraser C.M."/>
            <person name="Galagan J.E."/>
            <person name="Asai K."/>
            <person name="Machida M."/>
            <person name="Hall N."/>
            <person name="Barrell B.G."/>
            <person name="Denning D.W."/>
        </authorList>
    </citation>
    <scope>NUCLEOTIDE SEQUENCE [LARGE SCALE GENOMIC DNA]</scope>
    <source>
        <strain>ATCC MYA-4609 / CBS 101355 / FGSC A1100 / Af293</strain>
    </source>
</reference>
<reference key="2">
    <citation type="journal article" date="2007" name="PLoS Pathog.">
        <title>Transcriptional regulation of chemical diversity in Aspergillus fumigatus by LaeA.</title>
        <authorList>
            <person name="Perrin R.M."/>
            <person name="Fedorova N.D."/>
            <person name="Bok J.W."/>
            <person name="Cramer R.A."/>
            <person name="Wortman J.R."/>
            <person name="Kim H.S."/>
            <person name="Nierman W.C."/>
            <person name="Keller N.P."/>
        </authorList>
    </citation>
    <scope>INDUCTION</scope>
</reference>
<reference key="3">
    <citation type="journal article" date="2009" name="J. Am. Chem. Soc.">
        <title>Biosynthesis of steroidal antibiotic fusidanes: functional analysis of oxidosqualene cyclase and subsequent tailoring enzymes from Aspergillus fumigatus.</title>
        <authorList>
            <person name="Mitsuguchi H."/>
            <person name="Seshime Y."/>
            <person name="Fujii I."/>
            <person name="Shibuya M."/>
            <person name="Ebizuka Y."/>
            <person name="Kushiro T."/>
        </authorList>
    </citation>
    <scope>FUNCTION</scope>
    <scope>PATHWAY</scope>
</reference>
<reference key="4">
    <citation type="journal article" date="2009" name="Org. Lett.">
        <title>Protostadienol biosynthesis and metabolism in the pathogenic fungus Aspergillus fumigatus.</title>
        <authorList>
            <person name="Lodeiro S."/>
            <person name="Xiong Q."/>
            <person name="Wilson W.K."/>
            <person name="Ivanova Y."/>
            <person name="Smith M.L."/>
            <person name="May G.S."/>
            <person name="Matsuda S.P."/>
        </authorList>
    </citation>
    <scope>FUNCTION</scope>
</reference>
<reference key="5">
    <citation type="journal article" date="2014" name="BMC Genomics">
        <title>RNA-seq reveals the pan-transcriptomic impact of attenuating the gliotoxin self-protection mechanism in Aspergillus fumigatus.</title>
        <authorList>
            <person name="O'Keeffe G."/>
            <person name="Hammel S."/>
            <person name="Owens R.A."/>
            <person name="Keane T.M."/>
            <person name="Fitzpatrick D.A."/>
            <person name="Jones G.W."/>
            <person name="Doyle S."/>
        </authorList>
    </citation>
    <scope>INDUCTION</scope>
</reference>
<reference key="6">
    <citation type="journal article" date="2017" name="Nat. Commun.">
        <title>Biosynthesis of helvolic acid and identification of an unusual C-4-demethylation process distinct from sterol biosynthesis.</title>
        <authorList>
            <person name="Lv J.M."/>
            <person name="Hu D."/>
            <person name="Gao H."/>
            <person name="Kushiro T."/>
            <person name="Awakawa T."/>
            <person name="Chen G.D."/>
            <person name="Wang C.X."/>
            <person name="Abe I."/>
            <person name="Yao X.S."/>
        </authorList>
    </citation>
    <scope>FUNCTION</scope>
    <scope>CATALYTIC ACTIVITY</scope>
    <scope>PATHWAY</scope>
</reference>
<evidence type="ECO:0000250" key="1">
    <source>
        <dbReference type="UniProtKB" id="P04798"/>
    </source>
</evidence>
<evidence type="ECO:0000255" key="2"/>
<evidence type="ECO:0000269" key="3">
    <source>
    </source>
</evidence>
<evidence type="ECO:0000269" key="4">
    <source>
    </source>
</evidence>
<evidence type="ECO:0000269" key="5">
    <source>
    </source>
</evidence>
<evidence type="ECO:0000269" key="6">
    <source>
    </source>
</evidence>
<evidence type="ECO:0000269" key="7">
    <source>
    </source>
</evidence>
<evidence type="ECO:0000303" key="8">
    <source>
    </source>
</evidence>
<evidence type="ECO:0000303" key="9">
    <source>
    </source>
</evidence>
<evidence type="ECO:0000303" key="10">
    <source>
    </source>
</evidence>
<evidence type="ECO:0000305" key="11">
    <source>
    </source>
</evidence>
<feature type="signal peptide" evidence="2">
    <location>
        <begin position="1"/>
        <end position="22"/>
    </location>
</feature>
<feature type="chain" id="PRO_0000441948" description="Cytochrome P450 monooxygenase helB2" evidence="2">
    <location>
        <begin position="23"/>
        <end position="507"/>
    </location>
</feature>
<feature type="binding site" description="axial binding residue" evidence="1">
    <location>
        <position position="436"/>
    </location>
    <ligand>
        <name>heme</name>
        <dbReference type="ChEBI" id="CHEBI:30413"/>
    </ligand>
    <ligandPart>
        <name>Fe</name>
        <dbReference type="ChEBI" id="CHEBI:18248"/>
    </ligandPart>
</feature>
<keyword id="KW-0349">Heme</keyword>
<keyword id="KW-0408">Iron</keyword>
<keyword id="KW-0479">Metal-binding</keyword>
<keyword id="KW-0503">Monooxygenase</keyword>
<keyword id="KW-0560">Oxidoreductase</keyword>
<keyword id="KW-1185">Reference proteome</keyword>
<keyword id="KW-0732">Signal</keyword>
<dbReference type="EC" id="1.-.-.-" evidence="5 7"/>
<dbReference type="EMBL" id="AAHF01000005">
    <property type="protein sequence ID" value="EAL89316.1"/>
    <property type="molecule type" value="Genomic_DNA"/>
</dbReference>
<dbReference type="RefSeq" id="XP_751354.1">
    <property type="nucleotide sequence ID" value="XM_746261.1"/>
</dbReference>
<dbReference type="SMR" id="Q4WR18"/>
<dbReference type="STRING" id="330879.Q4WR18"/>
<dbReference type="EnsemblFungi" id="EAL89316">
    <property type="protein sequence ID" value="EAL89316"/>
    <property type="gene ID" value="AFUA_4G14790"/>
</dbReference>
<dbReference type="GeneID" id="3509335"/>
<dbReference type="KEGG" id="afm:AFUA_4G14790"/>
<dbReference type="VEuPathDB" id="FungiDB:Afu4g14790"/>
<dbReference type="eggNOG" id="KOG0156">
    <property type="taxonomic scope" value="Eukaryota"/>
</dbReference>
<dbReference type="HOGENOM" id="CLU_001570_14_2_1"/>
<dbReference type="InParanoid" id="Q4WR18"/>
<dbReference type="OMA" id="VEWIMAT"/>
<dbReference type="OrthoDB" id="655030at2759"/>
<dbReference type="Proteomes" id="UP000002530">
    <property type="component" value="Chromosome 4"/>
</dbReference>
<dbReference type="GO" id="GO:0020037">
    <property type="term" value="F:heme binding"/>
    <property type="evidence" value="ECO:0007669"/>
    <property type="project" value="InterPro"/>
</dbReference>
<dbReference type="GO" id="GO:0005506">
    <property type="term" value="F:iron ion binding"/>
    <property type="evidence" value="ECO:0007669"/>
    <property type="project" value="InterPro"/>
</dbReference>
<dbReference type="GO" id="GO:0004497">
    <property type="term" value="F:monooxygenase activity"/>
    <property type="evidence" value="ECO:0007669"/>
    <property type="project" value="UniProtKB-KW"/>
</dbReference>
<dbReference type="GO" id="GO:0016705">
    <property type="term" value="F:oxidoreductase activity, acting on paired donors, with incorporation or reduction of molecular oxygen"/>
    <property type="evidence" value="ECO:0007669"/>
    <property type="project" value="InterPro"/>
</dbReference>
<dbReference type="GO" id="GO:1900812">
    <property type="term" value="P:helvolic acid biosynthetic process"/>
    <property type="evidence" value="ECO:0000314"/>
    <property type="project" value="GO_Central"/>
</dbReference>
<dbReference type="GO" id="GO:0019748">
    <property type="term" value="P:secondary metabolic process"/>
    <property type="evidence" value="ECO:0000317"/>
    <property type="project" value="AspGD"/>
</dbReference>
<dbReference type="FunFam" id="1.10.630.10:FF:000075">
    <property type="entry name" value="Cytochrome P450 monooxygenase helB1"/>
    <property type="match status" value="1"/>
</dbReference>
<dbReference type="Gene3D" id="1.10.630.10">
    <property type="entry name" value="Cytochrome P450"/>
    <property type="match status" value="1"/>
</dbReference>
<dbReference type="InterPro" id="IPR001128">
    <property type="entry name" value="Cyt_P450"/>
</dbReference>
<dbReference type="InterPro" id="IPR017972">
    <property type="entry name" value="Cyt_P450_CS"/>
</dbReference>
<dbReference type="InterPro" id="IPR002401">
    <property type="entry name" value="Cyt_P450_E_grp-I"/>
</dbReference>
<dbReference type="InterPro" id="IPR036396">
    <property type="entry name" value="Cyt_P450_sf"/>
</dbReference>
<dbReference type="InterPro" id="IPR050121">
    <property type="entry name" value="Cytochrome_P450_monoxygenase"/>
</dbReference>
<dbReference type="PANTHER" id="PTHR24305">
    <property type="entry name" value="CYTOCHROME P450"/>
    <property type="match status" value="1"/>
</dbReference>
<dbReference type="PANTHER" id="PTHR24305:SF235">
    <property type="entry name" value="CYTOCHROME P450 MONOOXYGENASE APDB-RELATED"/>
    <property type="match status" value="1"/>
</dbReference>
<dbReference type="Pfam" id="PF00067">
    <property type="entry name" value="p450"/>
    <property type="match status" value="1"/>
</dbReference>
<dbReference type="PRINTS" id="PR00463">
    <property type="entry name" value="EP450I"/>
</dbReference>
<dbReference type="PRINTS" id="PR00385">
    <property type="entry name" value="P450"/>
</dbReference>
<dbReference type="SUPFAM" id="SSF48264">
    <property type="entry name" value="Cytochrome P450"/>
    <property type="match status" value="1"/>
</dbReference>
<dbReference type="PROSITE" id="PS00086">
    <property type="entry name" value="CYTOCHROME_P450"/>
    <property type="match status" value="1"/>
</dbReference>
<gene>
    <name evidence="10" type="primary">helB2</name>
    <name evidence="8" type="synonym">cyp5081B1</name>
    <name type="ORF">AFUA_4G14790</name>
</gene>
<organism>
    <name type="scientific">Aspergillus fumigatus (strain ATCC MYA-4609 / CBS 101355 / FGSC A1100 / Af293)</name>
    <name type="common">Neosartorya fumigata</name>
    <dbReference type="NCBI Taxonomy" id="330879"/>
    <lineage>
        <taxon>Eukaryota</taxon>
        <taxon>Fungi</taxon>
        <taxon>Dikarya</taxon>
        <taxon>Ascomycota</taxon>
        <taxon>Pezizomycotina</taxon>
        <taxon>Eurotiomycetes</taxon>
        <taxon>Eurotiomycetidae</taxon>
        <taxon>Eurotiales</taxon>
        <taxon>Aspergillaceae</taxon>
        <taxon>Aspergillus</taxon>
        <taxon>Aspergillus subgen. Fumigati</taxon>
    </lineage>
</organism>
<sequence length="507" mass="57810">MALPIILCLAVILWTSWRLLDALFLSPLHRVPGPVLARLTPLRAIYARLPSRVIPAALADFHSYGDIYLSKPRTITISHPRDVRAILASSEFQKIDVYHGLNDPVMANIVTFSDPKLASRRRRQIGPYFNPSYLAKMEELILRCGCRAVADKWGRLIAQQGHGPQKSVKVNYRHDLQLATFDIMSALAFGRWLDSLKEEGESVAIVEWIMATAVYIGVRINFRLLMVFPFSRLVRRWTRAYAEFVQFSKHAVASRKELLAQGCQKPVDLLQAFIDAEDPDSKVKMTTVEVQAESVGMQLAGSETTAASLTWAVHLFTLYPEYYRIAVDEVRGQFGPNHLITYADCSRLVFLEAFVYEMLRYTPITSSFMPRVSFTKGTTLQGHYIPPGTEIAFNLIAMNNREDVWEEPERFLPDRFLKDPDLKRSVFAFSYGTRSCIGRHLAWMEMMTILANLLKDYDWSLPEDSLYGPHHVDEKGIPIRMPSKCHIVFAPTHPDRDCQLVISRPKT</sequence>